<evidence type="ECO:0000250" key="1">
    <source>
        <dbReference type="UniProtKB" id="A0A2L0ART2"/>
    </source>
</evidence>
<evidence type="ECO:0000255" key="2"/>
<evidence type="ECO:0000305" key="3"/>
<evidence type="ECO:0000305" key="4">
    <source ref="1"/>
</evidence>
<evidence type="ECO:0000312" key="5">
    <source>
        <dbReference type="EMBL" id="AHA82508.1"/>
    </source>
</evidence>
<accession>V5N6J4</accession>
<protein>
    <recommendedName>
        <fullName evidence="3">U-scoloptoxin(15)-Ssm2a</fullName>
        <shortName evidence="3">U-SLPTX(15)-Ssm2a</shortName>
    </recommendedName>
    <alternativeName>
        <fullName evidence="5">Scolotoxin-Ssm2a</fullName>
    </alternativeName>
</protein>
<organism>
    <name type="scientific">Scolopendra mutilans</name>
    <name type="common">Chinese red-headed centipede</name>
    <name type="synonym">Scolopendra subspinipes mutilans</name>
    <dbReference type="NCBI Taxonomy" id="2836329"/>
    <lineage>
        <taxon>Eukaryota</taxon>
        <taxon>Metazoa</taxon>
        <taxon>Ecdysozoa</taxon>
        <taxon>Arthropoda</taxon>
        <taxon>Myriapoda</taxon>
        <taxon>Chilopoda</taxon>
        <taxon>Pleurostigmophora</taxon>
        <taxon>Scolopendromorpha</taxon>
        <taxon>Scolopendridae</taxon>
        <taxon>Scolopendra</taxon>
    </lineage>
</organism>
<proteinExistence type="inferred from homology"/>
<dbReference type="EMBL" id="KF555483">
    <property type="protein sequence ID" value="AHA82508.1"/>
    <property type="molecule type" value="mRNA"/>
</dbReference>
<dbReference type="SMR" id="V5N6J4"/>
<dbReference type="GO" id="GO:0005576">
    <property type="term" value="C:extracellular region"/>
    <property type="evidence" value="ECO:0007669"/>
    <property type="project" value="UniProtKB-SubCell"/>
</dbReference>
<dbReference type="GO" id="GO:0090729">
    <property type="term" value="F:toxin activity"/>
    <property type="evidence" value="ECO:0007669"/>
    <property type="project" value="UniProtKB-KW"/>
</dbReference>
<comment type="subcellular location">
    <subcellularLocation>
        <location evidence="4">Secreted</location>
    </subcellularLocation>
</comment>
<comment type="tissue specificity">
    <text evidence="4">Expressed by the venom gland.</text>
</comment>
<comment type="domain">
    <text evidence="1">Has the structural arrangement of an alpha-helix connected to a beta-sheet by disulfide bonds (CSalpha/beta). Since the toxin contains only 2 disulfide bonds, it is called 2ds-CSalpha/beta.</text>
</comment>
<comment type="similarity">
    <text evidence="3">Belongs to the SLPTX(15) family.</text>
</comment>
<sequence>MEKKIIFLCFFVSLLTLPEFISSQVLVEDDVPFPEKKFADRGECIRACAAKFTDGDLSKIKDVLPRYYKCVCWYYPTS</sequence>
<feature type="signal peptide" evidence="2">
    <location>
        <begin position="1"/>
        <end position="23"/>
    </location>
</feature>
<feature type="chain" id="PRO_5004740274" description="U-scoloptoxin(15)-Ssm2a" evidence="3">
    <location>
        <begin position="24"/>
        <end position="78"/>
    </location>
</feature>
<feature type="region of interest" description="Important for inhibition of KCNQ4" evidence="1">
    <location>
        <begin position="34"/>
        <end position="37"/>
    </location>
</feature>
<feature type="site" description="Important for inhibition of KCNQ4" evidence="1">
    <location>
        <position position="69"/>
    </location>
</feature>
<feature type="disulfide bond" evidence="1">
    <location>
        <begin position="44"/>
        <end position="70"/>
    </location>
</feature>
<feature type="disulfide bond" evidence="1">
    <location>
        <begin position="48"/>
        <end position="72"/>
    </location>
</feature>
<reference key="1">
    <citation type="submission" date="2013-08" db="EMBL/GenBank/DDBJ databases">
        <title>Insecticidal activity of recombinant centipede neurotoxin, rScolotoxin-Ssm2a on four species in Lepidoptera and Orthoptera.</title>
        <authorList>
            <person name="Hua W.J."/>
        </authorList>
    </citation>
    <scope>NUCLEOTIDE SEQUENCE [MRNA]</scope>
    <source>
        <tissue>Venom gland</tissue>
    </source>
</reference>
<keyword id="KW-1015">Disulfide bond</keyword>
<keyword id="KW-0964">Secreted</keyword>
<keyword id="KW-0732">Signal</keyword>
<keyword id="KW-0800">Toxin</keyword>
<name>TXF2A_SCOMU</name>